<organism>
    <name type="scientific">Vibrio vulnificus (strain CMCP6)</name>
    <dbReference type="NCBI Taxonomy" id="216895"/>
    <lineage>
        <taxon>Bacteria</taxon>
        <taxon>Pseudomonadati</taxon>
        <taxon>Pseudomonadota</taxon>
        <taxon>Gammaproteobacteria</taxon>
        <taxon>Vibrionales</taxon>
        <taxon>Vibrionaceae</taxon>
        <taxon>Vibrio</taxon>
    </lineage>
</organism>
<accession>Q8DA20</accession>
<dbReference type="EC" id="4.2.1.49" evidence="1"/>
<dbReference type="EMBL" id="AE016795">
    <property type="protein sequence ID" value="AAO10764.1"/>
    <property type="molecule type" value="Genomic_DNA"/>
</dbReference>
<dbReference type="RefSeq" id="WP_011080257.1">
    <property type="nucleotide sequence ID" value="NC_004459.3"/>
</dbReference>
<dbReference type="SMR" id="Q8DA20"/>
<dbReference type="KEGG" id="vvu:VV1_2390"/>
<dbReference type="HOGENOM" id="CLU_018868_0_1_6"/>
<dbReference type="UniPathway" id="UPA00379">
    <property type="reaction ID" value="UER00550"/>
</dbReference>
<dbReference type="Proteomes" id="UP000002275">
    <property type="component" value="Chromosome 1"/>
</dbReference>
<dbReference type="GO" id="GO:0005737">
    <property type="term" value="C:cytoplasm"/>
    <property type="evidence" value="ECO:0007669"/>
    <property type="project" value="UniProtKB-SubCell"/>
</dbReference>
<dbReference type="GO" id="GO:0016153">
    <property type="term" value="F:urocanate hydratase activity"/>
    <property type="evidence" value="ECO:0007669"/>
    <property type="project" value="UniProtKB-UniRule"/>
</dbReference>
<dbReference type="GO" id="GO:0019556">
    <property type="term" value="P:L-histidine catabolic process to glutamate and formamide"/>
    <property type="evidence" value="ECO:0007669"/>
    <property type="project" value="UniProtKB-UniPathway"/>
</dbReference>
<dbReference type="GO" id="GO:0019557">
    <property type="term" value="P:L-histidine catabolic process to glutamate and formate"/>
    <property type="evidence" value="ECO:0007669"/>
    <property type="project" value="UniProtKB-UniPathway"/>
</dbReference>
<dbReference type="FunFam" id="3.40.50.10730:FF:000001">
    <property type="entry name" value="Urocanate hydratase"/>
    <property type="match status" value="1"/>
</dbReference>
<dbReference type="Gene3D" id="3.40.50.10730">
    <property type="entry name" value="Urocanase like domains"/>
    <property type="match status" value="1"/>
</dbReference>
<dbReference type="Gene3D" id="3.40.1770.10">
    <property type="entry name" value="Urocanase superfamily"/>
    <property type="match status" value="1"/>
</dbReference>
<dbReference type="HAMAP" id="MF_00577">
    <property type="entry name" value="HutU"/>
    <property type="match status" value="1"/>
</dbReference>
<dbReference type="InterPro" id="IPR055351">
    <property type="entry name" value="Urocanase"/>
</dbReference>
<dbReference type="InterPro" id="IPR023637">
    <property type="entry name" value="Urocanase-like"/>
</dbReference>
<dbReference type="InterPro" id="IPR035401">
    <property type="entry name" value="Urocanase_C"/>
</dbReference>
<dbReference type="InterPro" id="IPR038364">
    <property type="entry name" value="Urocanase_central_sf"/>
</dbReference>
<dbReference type="InterPro" id="IPR023636">
    <property type="entry name" value="Urocanase_CS"/>
</dbReference>
<dbReference type="InterPro" id="IPR035400">
    <property type="entry name" value="Urocanase_N"/>
</dbReference>
<dbReference type="InterPro" id="IPR035085">
    <property type="entry name" value="Urocanase_Rossmann-like"/>
</dbReference>
<dbReference type="InterPro" id="IPR036190">
    <property type="entry name" value="Urocanase_sf"/>
</dbReference>
<dbReference type="NCBIfam" id="TIGR01228">
    <property type="entry name" value="hutU"/>
    <property type="match status" value="1"/>
</dbReference>
<dbReference type="NCBIfam" id="NF003820">
    <property type="entry name" value="PRK05414.1"/>
    <property type="match status" value="1"/>
</dbReference>
<dbReference type="PANTHER" id="PTHR12216">
    <property type="entry name" value="UROCANATE HYDRATASE"/>
    <property type="match status" value="1"/>
</dbReference>
<dbReference type="PANTHER" id="PTHR12216:SF4">
    <property type="entry name" value="UROCANATE HYDRATASE"/>
    <property type="match status" value="1"/>
</dbReference>
<dbReference type="Pfam" id="PF01175">
    <property type="entry name" value="Urocanase"/>
    <property type="match status" value="1"/>
</dbReference>
<dbReference type="Pfam" id="PF17392">
    <property type="entry name" value="Urocanase_C"/>
    <property type="match status" value="1"/>
</dbReference>
<dbReference type="Pfam" id="PF17391">
    <property type="entry name" value="Urocanase_N"/>
    <property type="match status" value="1"/>
</dbReference>
<dbReference type="PIRSF" id="PIRSF001423">
    <property type="entry name" value="Urocanate_hydrat"/>
    <property type="match status" value="1"/>
</dbReference>
<dbReference type="SUPFAM" id="SSF111326">
    <property type="entry name" value="Urocanase"/>
    <property type="match status" value="1"/>
</dbReference>
<dbReference type="PROSITE" id="PS01233">
    <property type="entry name" value="UROCANASE"/>
    <property type="match status" value="1"/>
</dbReference>
<gene>
    <name evidence="1" type="primary">hutU</name>
    <name type="ordered locus">VV1_2390</name>
</gene>
<comment type="function">
    <text evidence="1">Catalyzes the conversion of urocanate to 4-imidazolone-5-propionate.</text>
</comment>
<comment type="catalytic activity">
    <reaction evidence="1">
        <text>4-imidazolone-5-propanoate = trans-urocanate + H2O</text>
        <dbReference type="Rhea" id="RHEA:13101"/>
        <dbReference type="ChEBI" id="CHEBI:15377"/>
        <dbReference type="ChEBI" id="CHEBI:17771"/>
        <dbReference type="ChEBI" id="CHEBI:77893"/>
        <dbReference type="EC" id="4.2.1.49"/>
    </reaction>
</comment>
<comment type="cofactor">
    <cofactor evidence="1">
        <name>NAD(+)</name>
        <dbReference type="ChEBI" id="CHEBI:57540"/>
    </cofactor>
    <text evidence="1">Binds 1 NAD(+) per subunit.</text>
</comment>
<comment type="pathway">
    <text evidence="1">Amino-acid degradation; L-histidine degradation into L-glutamate; N-formimidoyl-L-glutamate from L-histidine: step 2/3.</text>
</comment>
<comment type="subcellular location">
    <subcellularLocation>
        <location evidence="1">Cytoplasm</location>
    </subcellularLocation>
</comment>
<comment type="similarity">
    <text evidence="1">Belongs to the urocanase family.</text>
</comment>
<evidence type="ECO:0000255" key="1">
    <source>
        <dbReference type="HAMAP-Rule" id="MF_00577"/>
    </source>
</evidence>
<proteinExistence type="inferred from homology"/>
<protein>
    <recommendedName>
        <fullName evidence="1">Urocanate hydratase</fullName>
        <shortName evidence="1">Urocanase</shortName>
        <ecNumber evidence="1">4.2.1.49</ecNumber>
    </recommendedName>
    <alternativeName>
        <fullName evidence="1">Imidazolonepropionate hydrolase</fullName>
    </alternativeName>
</protein>
<sequence length="565" mass="61676">MTQSQGQDPRLDTSRTIRAPHGTTLRAKSWLTEAPLRMLMNNLDPDVAEHPHALVVYGGIGRAARNWACFDKIVEVLERLEDDQTLLVQSGKPVGVFPTHKNAPRVLIANSNLVPHWANWEHFNELDKQGLMMYGQMTAGSWIYIGSQGIVQGTYETFVAVAKKHFAGEAKGRWVLTGGLGGMGGAQPLAATMAGFSMIAVECDESRIDYRLRTGYVDKKATTLEEALAIVKESDTPVSVGLLGNAADVFAELVERNITPDVVTDQTSAHDPLNGYLPQGWSMAYAAEMRQQDESTVVKAAKQSMAVQVKAMLELQSRGAATLDYGNNIRQMALEEGVENAFDFPGFVPAYIRPLFCEGIGPFRWAALSGDPEDIYKTDQKVKELIPDNPHLHNWLDMARERIQFQGLPARICWVGLKDRERLGQAFNEMVKNGELKAPIVIGRDHLDSGSVASPNRETEGMMDGSDAVSDWPLLNALLNTAGGATWVSLHHGGGVGMGFSQHSGMVICCDGTEDASARIARVLHNDPATGVMRHADAGYDIAKQCAAQQGLDLPMLNEELSKLK</sequence>
<keyword id="KW-0963">Cytoplasm</keyword>
<keyword id="KW-0369">Histidine metabolism</keyword>
<keyword id="KW-0456">Lyase</keyword>
<keyword id="KW-0520">NAD</keyword>
<name>HUTU_VIBVU</name>
<feature type="chain" id="PRO_0000207365" description="Urocanate hydratase">
    <location>
        <begin position="1"/>
        <end position="565"/>
    </location>
</feature>
<feature type="active site" evidence="1">
    <location>
        <position position="413"/>
    </location>
</feature>
<feature type="binding site" evidence="1">
    <location>
        <begin position="58"/>
        <end position="59"/>
    </location>
    <ligand>
        <name>NAD(+)</name>
        <dbReference type="ChEBI" id="CHEBI:57540"/>
    </ligand>
</feature>
<feature type="binding site" evidence="1">
    <location>
        <position position="136"/>
    </location>
    <ligand>
        <name>NAD(+)</name>
        <dbReference type="ChEBI" id="CHEBI:57540"/>
    </ligand>
</feature>
<feature type="binding site" evidence="1">
    <location>
        <begin position="182"/>
        <end position="184"/>
    </location>
    <ligand>
        <name>NAD(+)</name>
        <dbReference type="ChEBI" id="CHEBI:57540"/>
    </ligand>
</feature>
<feature type="binding site" evidence="1">
    <location>
        <position position="202"/>
    </location>
    <ligand>
        <name>NAD(+)</name>
        <dbReference type="ChEBI" id="CHEBI:57540"/>
    </ligand>
</feature>
<feature type="binding site" evidence="1">
    <location>
        <position position="207"/>
    </location>
    <ligand>
        <name>NAD(+)</name>
        <dbReference type="ChEBI" id="CHEBI:57540"/>
    </ligand>
</feature>
<feature type="binding site" evidence="1">
    <location>
        <begin position="245"/>
        <end position="246"/>
    </location>
    <ligand>
        <name>NAD(+)</name>
        <dbReference type="ChEBI" id="CHEBI:57540"/>
    </ligand>
</feature>
<feature type="binding site" evidence="1">
    <location>
        <begin position="266"/>
        <end position="270"/>
    </location>
    <ligand>
        <name>NAD(+)</name>
        <dbReference type="ChEBI" id="CHEBI:57540"/>
    </ligand>
</feature>
<feature type="binding site" evidence="1">
    <location>
        <begin position="276"/>
        <end position="277"/>
    </location>
    <ligand>
        <name>NAD(+)</name>
        <dbReference type="ChEBI" id="CHEBI:57540"/>
    </ligand>
</feature>
<feature type="binding site" evidence="1">
    <location>
        <position position="325"/>
    </location>
    <ligand>
        <name>NAD(+)</name>
        <dbReference type="ChEBI" id="CHEBI:57540"/>
    </ligand>
</feature>
<feature type="binding site" evidence="1">
    <location>
        <position position="495"/>
    </location>
    <ligand>
        <name>NAD(+)</name>
        <dbReference type="ChEBI" id="CHEBI:57540"/>
    </ligand>
</feature>
<reference key="1">
    <citation type="submission" date="2002-12" db="EMBL/GenBank/DDBJ databases">
        <title>Complete genome sequence of Vibrio vulnificus CMCP6.</title>
        <authorList>
            <person name="Rhee J.H."/>
            <person name="Kim S.Y."/>
            <person name="Chung S.S."/>
            <person name="Kim J.J."/>
            <person name="Moon Y.H."/>
            <person name="Jeong H."/>
            <person name="Choy H.E."/>
        </authorList>
    </citation>
    <scope>NUCLEOTIDE SEQUENCE [LARGE SCALE GENOMIC DNA]</scope>
    <source>
        <strain>CMCP6</strain>
    </source>
</reference>